<protein>
    <recommendedName>
        <fullName evidence="1">Glutamyl-tRNA reductase</fullName>
        <shortName evidence="1">GluTR</shortName>
        <ecNumber evidence="1">1.2.1.70</ecNumber>
    </recommendedName>
</protein>
<gene>
    <name evidence="1" type="primary">hemA</name>
    <name type="ordered locus">SA1496</name>
</gene>
<feature type="chain" id="PRO_0000114069" description="Glutamyl-tRNA reductase">
    <location>
        <begin position="1"/>
        <end position="448"/>
    </location>
</feature>
<feature type="active site" description="Nucleophile" evidence="1">
    <location>
        <position position="50"/>
    </location>
</feature>
<feature type="binding site" evidence="1">
    <location>
        <begin position="49"/>
        <end position="52"/>
    </location>
    <ligand>
        <name>substrate</name>
    </ligand>
</feature>
<feature type="binding site" evidence="1">
    <location>
        <position position="109"/>
    </location>
    <ligand>
        <name>substrate</name>
    </ligand>
</feature>
<feature type="binding site" evidence="1">
    <location>
        <begin position="114"/>
        <end position="116"/>
    </location>
    <ligand>
        <name>substrate</name>
    </ligand>
</feature>
<feature type="binding site" evidence="1">
    <location>
        <position position="120"/>
    </location>
    <ligand>
        <name>substrate</name>
    </ligand>
</feature>
<feature type="binding site" evidence="1">
    <location>
        <begin position="189"/>
        <end position="194"/>
    </location>
    <ligand>
        <name>NADP(+)</name>
        <dbReference type="ChEBI" id="CHEBI:58349"/>
    </ligand>
</feature>
<feature type="site" description="Important for activity" evidence="1">
    <location>
        <position position="99"/>
    </location>
</feature>
<evidence type="ECO:0000255" key="1">
    <source>
        <dbReference type="HAMAP-Rule" id="MF_00087"/>
    </source>
</evidence>
<reference key="1">
    <citation type="journal article" date="2001" name="Lancet">
        <title>Whole genome sequencing of meticillin-resistant Staphylococcus aureus.</title>
        <authorList>
            <person name="Kuroda M."/>
            <person name="Ohta T."/>
            <person name="Uchiyama I."/>
            <person name="Baba T."/>
            <person name="Yuzawa H."/>
            <person name="Kobayashi I."/>
            <person name="Cui L."/>
            <person name="Oguchi A."/>
            <person name="Aoki K."/>
            <person name="Nagai Y."/>
            <person name="Lian J.-Q."/>
            <person name="Ito T."/>
            <person name="Kanamori M."/>
            <person name="Matsumaru H."/>
            <person name="Maruyama A."/>
            <person name="Murakami H."/>
            <person name="Hosoyama A."/>
            <person name="Mizutani-Ui Y."/>
            <person name="Takahashi N.K."/>
            <person name="Sawano T."/>
            <person name="Inoue R."/>
            <person name="Kaito C."/>
            <person name="Sekimizu K."/>
            <person name="Hirakawa H."/>
            <person name="Kuhara S."/>
            <person name="Goto S."/>
            <person name="Yabuzaki J."/>
            <person name="Kanehisa M."/>
            <person name="Yamashita A."/>
            <person name="Oshima K."/>
            <person name="Furuya K."/>
            <person name="Yoshino C."/>
            <person name="Shiba T."/>
            <person name="Hattori M."/>
            <person name="Ogasawara N."/>
            <person name="Hayashi H."/>
            <person name="Hiramatsu K."/>
        </authorList>
    </citation>
    <scope>NUCLEOTIDE SEQUENCE [LARGE SCALE GENOMIC DNA]</scope>
    <source>
        <strain>N315</strain>
    </source>
</reference>
<comment type="function">
    <text evidence="1">Catalyzes the NADPH-dependent reduction of glutamyl-tRNA(Glu) to glutamate 1-semialdehyde (GSA).</text>
</comment>
<comment type="catalytic activity">
    <reaction evidence="1">
        <text>(S)-4-amino-5-oxopentanoate + tRNA(Glu) + NADP(+) = L-glutamyl-tRNA(Glu) + NADPH + H(+)</text>
        <dbReference type="Rhea" id="RHEA:12344"/>
        <dbReference type="Rhea" id="RHEA-COMP:9663"/>
        <dbReference type="Rhea" id="RHEA-COMP:9680"/>
        <dbReference type="ChEBI" id="CHEBI:15378"/>
        <dbReference type="ChEBI" id="CHEBI:57501"/>
        <dbReference type="ChEBI" id="CHEBI:57783"/>
        <dbReference type="ChEBI" id="CHEBI:58349"/>
        <dbReference type="ChEBI" id="CHEBI:78442"/>
        <dbReference type="ChEBI" id="CHEBI:78520"/>
        <dbReference type="EC" id="1.2.1.70"/>
    </reaction>
</comment>
<comment type="pathway">
    <text evidence="1">Porphyrin-containing compound metabolism; protoporphyrin-IX biosynthesis; 5-aminolevulinate from L-glutamyl-tRNA(Glu): step 1/2.</text>
</comment>
<comment type="subunit">
    <text evidence="1">Homodimer.</text>
</comment>
<comment type="domain">
    <text evidence="1">Possesses an unusual extended V-shaped dimeric structure with each monomer consisting of three distinct domains arranged along a curved 'spinal' alpha-helix. The N-terminal catalytic domain specifically recognizes the glutamate moiety of the substrate. The second domain is the NADPH-binding domain, and the third C-terminal domain is responsible for dimerization.</text>
</comment>
<comment type="miscellaneous">
    <text evidence="1">During catalysis, the active site Cys acts as a nucleophile attacking the alpha-carbonyl group of tRNA-bound glutamate with the formation of a thioester intermediate between enzyme and glutamate, and the concomitant release of tRNA(Glu). The thioester intermediate is finally reduced by direct hydride transfer from NADPH, to form the product GSA.</text>
</comment>
<comment type="similarity">
    <text evidence="1">Belongs to the glutamyl-tRNA reductase family.</text>
</comment>
<sequence>MHFIAISINHRTADVALREQVAFRDDALRIAHEDLYETKSILENVILSTCNRTEVYAVVDQIHTGRYYIQRFLARAFGFEVDDIKAMSEVKVGDEAVEHLLRVTSGLDSIVLGETQILGQIRDAFFLAQSTGTTGTIFNHLFKQAITFAKRAHNETDIADNAVSVSYAAVELAKKVFGKLKSKQAIIIGAGEMSELSLLNLLGSGITDITVVNRTIENAMKLAAKHQVKYDELSSLPNLLESADIVISSTSAQSYIITNEMIERIAENRKQDSLVLIDIAVPRDIEPGISAITNIFNYDVDDLKGLVDANLRERQLAAATISEQIPAEIHAHNEWISMLGVVPVIRALREKAMAIQAETMDSIDRKLPGLSERERKIISKHTKSIINQMLKDPIKQAKELSSDKKSNEKLELFQNIFDIEAECPHEQAKQQKESKVKEISARRIFSFE</sequence>
<keyword id="KW-0521">NADP</keyword>
<keyword id="KW-0560">Oxidoreductase</keyword>
<keyword id="KW-0627">Porphyrin biosynthesis</keyword>
<dbReference type="EC" id="1.2.1.70" evidence="1"/>
<dbReference type="EMBL" id="BA000018">
    <property type="protein sequence ID" value="BAB42763.1"/>
    <property type="molecule type" value="Genomic_DNA"/>
</dbReference>
<dbReference type="PIR" id="F89950">
    <property type="entry name" value="F89950"/>
</dbReference>
<dbReference type="RefSeq" id="WP_000545451.1">
    <property type="nucleotide sequence ID" value="NC_002745.2"/>
</dbReference>
<dbReference type="SMR" id="P64331"/>
<dbReference type="EnsemblBacteria" id="BAB42763">
    <property type="protein sequence ID" value="BAB42763"/>
    <property type="gene ID" value="BAB42763"/>
</dbReference>
<dbReference type="KEGG" id="sau:SA1496"/>
<dbReference type="HOGENOM" id="CLU_035113_2_2_9"/>
<dbReference type="UniPathway" id="UPA00251">
    <property type="reaction ID" value="UER00316"/>
</dbReference>
<dbReference type="GO" id="GO:0008883">
    <property type="term" value="F:glutamyl-tRNA reductase activity"/>
    <property type="evidence" value="ECO:0007669"/>
    <property type="project" value="UniProtKB-UniRule"/>
</dbReference>
<dbReference type="GO" id="GO:0050661">
    <property type="term" value="F:NADP binding"/>
    <property type="evidence" value="ECO:0007669"/>
    <property type="project" value="InterPro"/>
</dbReference>
<dbReference type="GO" id="GO:0006782">
    <property type="term" value="P:protoporphyrinogen IX biosynthetic process"/>
    <property type="evidence" value="ECO:0007669"/>
    <property type="project" value="UniProtKB-UniRule"/>
</dbReference>
<dbReference type="CDD" id="cd05213">
    <property type="entry name" value="NAD_bind_Glutamyl_tRNA_reduct"/>
    <property type="match status" value="1"/>
</dbReference>
<dbReference type="FunFam" id="3.30.460.30:FF:000001">
    <property type="entry name" value="Glutamyl-tRNA reductase"/>
    <property type="match status" value="1"/>
</dbReference>
<dbReference type="FunFam" id="3.40.50.720:FF:000031">
    <property type="entry name" value="Glutamyl-tRNA reductase"/>
    <property type="match status" value="1"/>
</dbReference>
<dbReference type="Gene3D" id="3.30.460.30">
    <property type="entry name" value="Glutamyl-tRNA reductase, N-terminal domain"/>
    <property type="match status" value="1"/>
</dbReference>
<dbReference type="Gene3D" id="3.40.50.720">
    <property type="entry name" value="NAD(P)-binding Rossmann-like Domain"/>
    <property type="match status" value="1"/>
</dbReference>
<dbReference type="HAMAP" id="MF_00087">
    <property type="entry name" value="Glu_tRNA_reductase"/>
    <property type="match status" value="1"/>
</dbReference>
<dbReference type="InterPro" id="IPR000343">
    <property type="entry name" value="4pyrrol_synth_GluRdtase"/>
</dbReference>
<dbReference type="InterPro" id="IPR015896">
    <property type="entry name" value="4pyrrol_synth_GluRdtase_dimer"/>
</dbReference>
<dbReference type="InterPro" id="IPR015895">
    <property type="entry name" value="4pyrrol_synth_GluRdtase_N"/>
</dbReference>
<dbReference type="InterPro" id="IPR018214">
    <property type="entry name" value="GluRdtase_CS"/>
</dbReference>
<dbReference type="InterPro" id="IPR036453">
    <property type="entry name" value="GluRdtase_dimer_dom_sf"/>
</dbReference>
<dbReference type="InterPro" id="IPR036343">
    <property type="entry name" value="GluRdtase_N_sf"/>
</dbReference>
<dbReference type="InterPro" id="IPR036291">
    <property type="entry name" value="NAD(P)-bd_dom_sf"/>
</dbReference>
<dbReference type="InterPro" id="IPR006151">
    <property type="entry name" value="Shikm_DH/Glu-tRNA_Rdtase"/>
</dbReference>
<dbReference type="NCBIfam" id="TIGR01035">
    <property type="entry name" value="hemA"/>
    <property type="match status" value="1"/>
</dbReference>
<dbReference type="PANTHER" id="PTHR43120">
    <property type="entry name" value="GLUTAMYL-TRNA REDUCTASE 1, CHLOROPLASTIC"/>
    <property type="match status" value="1"/>
</dbReference>
<dbReference type="PANTHER" id="PTHR43120:SF1">
    <property type="entry name" value="GLUTAMYL-TRNA REDUCTASE 1, CHLOROPLASTIC"/>
    <property type="match status" value="1"/>
</dbReference>
<dbReference type="Pfam" id="PF00745">
    <property type="entry name" value="GlutR_dimer"/>
    <property type="match status" value="1"/>
</dbReference>
<dbReference type="Pfam" id="PF05201">
    <property type="entry name" value="GlutR_N"/>
    <property type="match status" value="1"/>
</dbReference>
<dbReference type="Pfam" id="PF01488">
    <property type="entry name" value="Shikimate_DH"/>
    <property type="match status" value="1"/>
</dbReference>
<dbReference type="PIRSF" id="PIRSF000445">
    <property type="entry name" value="4pyrrol_synth_GluRdtase"/>
    <property type="match status" value="1"/>
</dbReference>
<dbReference type="SUPFAM" id="SSF69742">
    <property type="entry name" value="Glutamyl tRNA-reductase catalytic, N-terminal domain"/>
    <property type="match status" value="1"/>
</dbReference>
<dbReference type="SUPFAM" id="SSF69075">
    <property type="entry name" value="Glutamyl tRNA-reductase dimerization domain"/>
    <property type="match status" value="1"/>
</dbReference>
<dbReference type="SUPFAM" id="SSF51735">
    <property type="entry name" value="NAD(P)-binding Rossmann-fold domains"/>
    <property type="match status" value="1"/>
</dbReference>
<dbReference type="PROSITE" id="PS00747">
    <property type="entry name" value="GLUTR"/>
    <property type="match status" value="1"/>
</dbReference>
<proteinExistence type="inferred from homology"/>
<organism>
    <name type="scientific">Staphylococcus aureus (strain N315)</name>
    <dbReference type="NCBI Taxonomy" id="158879"/>
    <lineage>
        <taxon>Bacteria</taxon>
        <taxon>Bacillati</taxon>
        <taxon>Bacillota</taxon>
        <taxon>Bacilli</taxon>
        <taxon>Bacillales</taxon>
        <taxon>Staphylococcaceae</taxon>
        <taxon>Staphylococcus</taxon>
    </lineage>
</organism>
<name>HEM1_STAAN</name>
<accession>P64331</accession>
<accession>Q99TI9</accession>